<reference key="1">
    <citation type="journal article" date="2010" name="J. Bacteriol.">
        <title>The genome of the amoeba symbiont 'Candidatus Amoebophilus asiaticus' reveals common mechanisms for host cell interaction among amoeba-associated bacteria.</title>
        <authorList>
            <person name="Schmitz-Esser S."/>
            <person name="Tischler P."/>
            <person name="Arnold R."/>
            <person name="Montanaro J."/>
            <person name="Wagner M."/>
            <person name="Rattei T."/>
            <person name="Horn M."/>
        </authorList>
    </citation>
    <scope>NUCLEOTIDE SEQUENCE [LARGE SCALE GENOMIC DNA]</scope>
    <source>
        <strain>5a2</strain>
    </source>
</reference>
<comment type="function">
    <text evidence="1">Could be involved in insertion of integral membrane proteins into the membrane.</text>
</comment>
<comment type="subcellular location">
    <subcellularLocation>
        <location evidence="1">Cell inner membrane</location>
        <topology evidence="1">Peripheral membrane protein</topology>
        <orientation evidence="1">Cytoplasmic side</orientation>
    </subcellularLocation>
</comment>
<comment type="similarity">
    <text evidence="1">Belongs to the UPF0161 family.</text>
</comment>
<keyword id="KW-0997">Cell inner membrane</keyword>
<keyword id="KW-1003">Cell membrane</keyword>
<keyword id="KW-0472">Membrane</keyword>
<keyword id="KW-1185">Reference proteome</keyword>
<organism>
    <name type="scientific">Amoebophilus asiaticus (strain 5a2)</name>
    <dbReference type="NCBI Taxonomy" id="452471"/>
    <lineage>
        <taxon>Bacteria</taxon>
        <taxon>Pseudomonadati</taxon>
        <taxon>Bacteroidota</taxon>
        <taxon>Cytophagia</taxon>
        <taxon>Cytophagales</taxon>
        <taxon>Amoebophilaceae</taxon>
        <taxon>Candidatus Amoebophilus</taxon>
    </lineage>
</organism>
<dbReference type="EMBL" id="CP001102">
    <property type="protein sequence ID" value="ACE05586.1"/>
    <property type="molecule type" value="Genomic_DNA"/>
</dbReference>
<dbReference type="RefSeq" id="WP_012472356.1">
    <property type="nucleotide sequence ID" value="NC_010830.1"/>
</dbReference>
<dbReference type="STRING" id="452471.Aasi_0140"/>
<dbReference type="KEGG" id="aas:Aasi_0140"/>
<dbReference type="eggNOG" id="COG0759">
    <property type="taxonomic scope" value="Bacteria"/>
</dbReference>
<dbReference type="HOGENOM" id="CLU_144811_6_1_10"/>
<dbReference type="OrthoDB" id="9801753at2"/>
<dbReference type="Proteomes" id="UP000001227">
    <property type="component" value="Chromosome"/>
</dbReference>
<dbReference type="GO" id="GO:0005886">
    <property type="term" value="C:plasma membrane"/>
    <property type="evidence" value="ECO:0007669"/>
    <property type="project" value="UniProtKB-SubCell"/>
</dbReference>
<dbReference type="HAMAP" id="MF_00386">
    <property type="entry name" value="UPF0161_YidD"/>
    <property type="match status" value="1"/>
</dbReference>
<dbReference type="InterPro" id="IPR002696">
    <property type="entry name" value="Membr_insert_effic_factor_YidD"/>
</dbReference>
<dbReference type="NCBIfam" id="TIGR00278">
    <property type="entry name" value="membrane protein insertion efficiency factor YidD"/>
    <property type="match status" value="1"/>
</dbReference>
<dbReference type="PANTHER" id="PTHR33383">
    <property type="entry name" value="MEMBRANE PROTEIN INSERTION EFFICIENCY FACTOR-RELATED"/>
    <property type="match status" value="1"/>
</dbReference>
<dbReference type="PANTHER" id="PTHR33383:SF1">
    <property type="entry name" value="MEMBRANE PROTEIN INSERTION EFFICIENCY FACTOR-RELATED"/>
    <property type="match status" value="1"/>
</dbReference>
<dbReference type="Pfam" id="PF01809">
    <property type="entry name" value="YidD"/>
    <property type="match status" value="1"/>
</dbReference>
<dbReference type="SMART" id="SM01234">
    <property type="entry name" value="Haemolytic"/>
    <property type="match status" value="1"/>
</dbReference>
<gene>
    <name type="ordered locus">Aasi_0140</name>
</gene>
<sequence length="72" mass="8228">MWLLKRIVIFPIWVYQVALAPYLTPCCRFQPTCSAYAHEAINKHGIVKGIWLAGKRILRCHPCGKSGYDPVQ</sequence>
<accession>B3EUG7</accession>
<name>YIDD_AMOA5</name>
<evidence type="ECO:0000255" key="1">
    <source>
        <dbReference type="HAMAP-Rule" id="MF_00386"/>
    </source>
</evidence>
<feature type="chain" id="PRO_1000122611" description="Putative membrane protein insertion efficiency factor">
    <location>
        <begin position="1"/>
        <end position="72"/>
    </location>
</feature>
<proteinExistence type="inferred from homology"/>
<protein>
    <recommendedName>
        <fullName evidence="1">Putative membrane protein insertion efficiency factor</fullName>
    </recommendedName>
</protein>